<comment type="function">
    <text evidence="3">Catalyzes the addition of a single glycerol phosphate residue to the prenoldiphosphate-linked disaccharide.</text>
</comment>
<comment type="catalytic activity">
    <reaction evidence="2">
        <text>N-acetyl-beta-D-mannosaminyl-(1-&gt;4)-N-acetyl-alpha-D-glucosaminyl di-trans,octa-cis-undecaprenyl diphosphate + CDP-glycerol = 4-O-[(2R)-glycerylphospho]-N-acetyl-beta-D-mannosaminyl-(1-&gt;4)-N-acetyl-alpha-D-glucosaminyl di-trans,octa-cis-undecaprenyl diphosphate + CMP + H(+)</text>
        <dbReference type="Rhea" id="RHEA:33815"/>
        <dbReference type="ChEBI" id="CHEBI:15378"/>
        <dbReference type="ChEBI" id="CHEBI:58311"/>
        <dbReference type="ChEBI" id="CHEBI:60377"/>
        <dbReference type="ChEBI" id="CHEBI:132210"/>
        <dbReference type="ChEBI" id="CHEBI:132211"/>
        <dbReference type="EC" id="2.7.8.44"/>
    </reaction>
</comment>
<comment type="pathway">
    <text>Cell wall biogenesis; poly(ribitol phosphate) teichoic acid biosynthesis.</text>
</comment>
<comment type="subcellular location">
    <subcellularLocation>
        <location evidence="1">Cell membrane</location>
        <topology evidence="1">Peripheral membrane protein</topology>
        <orientation evidence="1">Cytoplasmic side</orientation>
    </subcellularLocation>
</comment>
<comment type="similarity">
    <text evidence="4">Belongs to the CDP-glycerol glycerophosphotransferase family.</text>
</comment>
<organism>
    <name type="scientific">Bacillus spizizenii (strain ATCC 23059 / NRRL B-14472 / W23)</name>
    <name type="common">Bacillus subtilis subsp. spizizenii</name>
    <dbReference type="NCBI Taxonomy" id="655816"/>
    <lineage>
        <taxon>Bacteria</taxon>
        <taxon>Bacillati</taxon>
        <taxon>Bacillota</taxon>
        <taxon>Bacilli</taxon>
        <taxon>Bacillales</taxon>
        <taxon>Bacillaceae</taxon>
        <taxon>Bacillus</taxon>
    </lineage>
</organism>
<gene>
    <name type="primary">tarB</name>
    <name type="ordered locus">BSUW23_17560</name>
</gene>
<reference key="1">
    <citation type="journal article" date="2002" name="Microbiology">
        <title>Comparison of ribitol and glycerol teichoic acid genes in Bacillus subtilis W23 and 168: identical function, similar divergent organization, but different regulation.</title>
        <authorList>
            <person name="Lazarevic V."/>
            <person name="Abellan F.-X."/>
            <person name="Beggah Moeller S."/>
            <person name="Karamata D."/>
            <person name="Maueel C."/>
        </authorList>
    </citation>
    <scope>NUCLEOTIDE SEQUENCE [GENOMIC DNA]</scope>
    <scope>FUNCTION</scope>
    <source>
        <strain>ATCC 23059 / NRRL B-14472 / W23</strain>
    </source>
</reference>
<reference key="2">
    <citation type="submission" date="2006-04" db="EMBL/GenBank/DDBJ databases">
        <title>Minor teichoic acid of Bacillus subtilis W23.</title>
        <authorList>
            <person name="Soldo B."/>
            <person name="Freymond P.P."/>
            <person name="Karamata D."/>
            <person name="Lazarevic V."/>
        </authorList>
    </citation>
    <scope>NUCLEOTIDE SEQUENCE [GENOMIC DNA]</scope>
    <source>
        <strain>ATCC 23059 / NRRL B-14472 / W23</strain>
    </source>
</reference>
<reference key="3">
    <citation type="journal article" date="2011" name="Microbiology">
        <title>The genome sequence of Bacillus subtilis subsp. spizizenii W23: insights into speciation within the B. subtilis complex and into the history of B. subtilis genetics.</title>
        <authorList>
            <person name="Zeigler D.R."/>
        </authorList>
    </citation>
    <scope>NUCLEOTIDE SEQUENCE [LARGE SCALE GENOMIC DNA]</scope>
    <source>
        <strain>ATCC 23059 / NRRL B-14472 / W23</strain>
    </source>
</reference>
<proteinExistence type="inferred from homology"/>
<name>TARB_BACSH</name>
<evidence type="ECO:0000250" key="1">
    <source>
        <dbReference type="UniProtKB" id="P27621"/>
    </source>
</evidence>
<evidence type="ECO:0000250" key="2">
    <source>
        <dbReference type="UniProtKB" id="Q2G2X4"/>
    </source>
</evidence>
<evidence type="ECO:0000303" key="3">
    <source>
    </source>
</evidence>
<evidence type="ECO:0000305" key="4"/>
<dbReference type="EC" id="2.7.8.44" evidence="2"/>
<dbReference type="EMBL" id="AJ313428">
    <property type="protein sequence ID" value="CAC86110.1"/>
    <property type="molecule type" value="Genomic_DNA"/>
</dbReference>
<dbReference type="EMBL" id="AM260209">
    <property type="protein sequence ID" value="CAJ97397.1"/>
    <property type="molecule type" value="Genomic_DNA"/>
</dbReference>
<dbReference type="EMBL" id="CP002183">
    <property type="protein sequence ID" value="ADM39547.1"/>
    <property type="molecule type" value="Genomic_DNA"/>
</dbReference>
<dbReference type="SMR" id="Q8RKI8"/>
<dbReference type="KEGG" id="bss:BSUW23_17560"/>
<dbReference type="HOGENOM" id="CLU_029598_0_1_9"/>
<dbReference type="BioCyc" id="MetaCyc:MONOMER-19962"/>
<dbReference type="UniPathway" id="UPA00790"/>
<dbReference type="Proteomes" id="UP000002233">
    <property type="component" value="Chromosome"/>
</dbReference>
<dbReference type="GO" id="GO:0005886">
    <property type="term" value="C:plasma membrane"/>
    <property type="evidence" value="ECO:0007669"/>
    <property type="project" value="UniProtKB-SubCell"/>
</dbReference>
<dbReference type="GO" id="GO:0047355">
    <property type="term" value="F:CDP-glycerol glycerophosphotransferase activity"/>
    <property type="evidence" value="ECO:0007669"/>
    <property type="project" value="InterPro"/>
</dbReference>
<dbReference type="GO" id="GO:0071555">
    <property type="term" value="P:cell wall organization"/>
    <property type="evidence" value="ECO:0007669"/>
    <property type="project" value="UniProtKB-KW"/>
</dbReference>
<dbReference type="GO" id="GO:0019350">
    <property type="term" value="P:teichoic acid biosynthetic process"/>
    <property type="evidence" value="ECO:0007669"/>
    <property type="project" value="UniProtKB-KW"/>
</dbReference>
<dbReference type="Gene3D" id="3.40.50.11820">
    <property type="match status" value="1"/>
</dbReference>
<dbReference type="Gene3D" id="3.40.50.12580">
    <property type="match status" value="1"/>
</dbReference>
<dbReference type="InterPro" id="IPR007554">
    <property type="entry name" value="Glycerophosphate_synth"/>
</dbReference>
<dbReference type="InterPro" id="IPR043148">
    <property type="entry name" value="TagF_C"/>
</dbReference>
<dbReference type="InterPro" id="IPR043149">
    <property type="entry name" value="TagF_N"/>
</dbReference>
<dbReference type="InterPro" id="IPR051612">
    <property type="entry name" value="Teichoic_Acid_Biosynth"/>
</dbReference>
<dbReference type="PANTHER" id="PTHR37316">
    <property type="entry name" value="TEICHOIC ACID GLYCEROL-PHOSPHATE PRIMASE"/>
    <property type="match status" value="1"/>
</dbReference>
<dbReference type="PANTHER" id="PTHR37316:SF1">
    <property type="entry name" value="TEICHOIC ACID GLYCEROL-PHOSPHATE PRIMASE"/>
    <property type="match status" value="1"/>
</dbReference>
<dbReference type="Pfam" id="PF04464">
    <property type="entry name" value="Glyphos_transf"/>
    <property type="match status" value="1"/>
</dbReference>
<dbReference type="SUPFAM" id="SSF53756">
    <property type="entry name" value="UDP-Glycosyltransferase/glycogen phosphorylase"/>
    <property type="match status" value="1"/>
</dbReference>
<protein>
    <recommendedName>
        <fullName evidence="4">Teichoic acid glycerol-phosphate primase</fullName>
        <ecNumber evidence="2">2.7.8.44</ecNumber>
    </recommendedName>
    <alternativeName>
        <fullName>CDP-glycerol:N-acetyl-beta-D-mannosaminyl-1,4-N-acetyl-D-glucosaminyldiphosphoundecaprenyl glycerophosphotransferase</fullName>
    </alternativeName>
    <alternativeName>
        <fullName>Tag primase</fullName>
    </alternativeName>
</protein>
<keyword id="KW-1003">Cell membrane</keyword>
<keyword id="KW-0961">Cell wall biogenesis/degradation</keyword>
<keyword id="KW-0472">Membrane</keyword>
<keyword id="KW-0777">Teichoic acid biosynthesis</keyword>
<keyword id="KW-0808">Transferase</keyword>
<sequence>MKSWFAFFYYLFIKVIGALLFWVKLGNQVTLLVSFPDNARAILKEYQKGHFSFPIHVLLTQHAKSLEKEFPELTVSVINEKHPLHICKAVFSMLNSKTVIVDNYFVLTTVLTSRPDIECIQVWHANGAFKRFGLKDINTQNRSRADIRRFRKVYASFDRIVVGSEHMADIFKEFFDIKGDTFLRFGVPLTDAYYEARENSNDLKSKYQLPAEKKIILYAPTFRDHQFESFSLPFSEKQLQHDLKGEYLLAVKLHPVMKESAELPEDSAWIKDVSDLPLADLLKMSDLLISDYSSVPFEFALLDKPILFYTYDMEAYNRTRGLIRHYTEVIPGMPCCDSGMLLDQLKDMDKLQSEVERFSREWNLYSRGNASKQLLSYVNEKSN</sequence>
<feature type="chain" id="PRO_0000208448" description="Teichoic acid glycerol-phosphate primase">
    <location>
        <begin position="1"/>
        <end position="383"/>
    </location>
</feature>
<accession>Q8RKI8</accession>
<accession>B7ZDK8</accession>
<accession>E0U4X6</accession>